<organism>
    <name type="scientific">Streptococcus pneumoniae serotype 2 (strain D39 / NCTC 7466)</name>
    <dbReference type="NCBI Taxonomy" id="373153"/>
    <lineage>
        <taxon>Bacteria</taxon>
        <taxon>Bacillati</taxon>
        <taxon>Bacillota</taxon>
        <taxon>Bacilli</taxon>
        <taxon>Lactobacillales</taxon>
        <taxon>Streptococcaceae</taxon>
        <taxon>Streptococcus</taxon>
    </lineage>
</organism>
<name>TPX_STRP2</name>
<keyword id="KW-0049">Antioxidant</keyword>
<keyword id="KW-1015">Disulfide bond</keyword>
<keyword id="KW-0560">Oxidoreductase</keyword>
<keyword id="KW-0575">Peroxidase</keyword>
<keyword id="KW-0676">Redox-active center</keyword>
<keyword id="KW-1185">Reference proteome</keyword>
<feature type="chain" id="PRO_0000279545" description="Thiol peroxidase">
    <location>
        <begin position="1"/>
        <end position="163"/>
    </location>
</feature>
<feature type="domain" description="Thioredoxin" evidence="1">
    <location>
        <begin position="16"/>
        <end position="162"/>
    </location>
</feature>
<feature type="active site" description="Cysteine sulfenic acid (-SOH) intermediate" evidence="1">
    <location>
        <position position="58"/>
    </location>
</feature>
<feature type="disulfide bond" description="Redox-active" evidence="1">
    <location>
        <begin position="58"/>
        <end position="92"/>
    </location>
</feature>
<protein>
    <recommendedName>
        <fullName evidence="1">Thiol peroxidase</fullName>
        <shortName evidence="1">Tpx</shortName>
        <ecNumber evidence="1">1.11.1.24</ecNumber>
    </recommendedName>
    <alternativeName>
        <fullName evidence="1">Peroxiredoxin tpx</fullName>
        <shortName evidence="1">Prx</shortName>
    </alternativeName>
    <alternativeName>
        <fullName evidence="1">Thioredoxin peroxidase</fullName>
    </alternativeName>
    <alternativeName>
        <fullName evidence="1">Thioredoxin-dependent peroxiredoxin</fullName>
    </alternativeName>
</protein>
<comment type="function">
    <text evidence="1">Thiol-specific peroxidase that catalyzes the reduction of hydrogen peroxide and organic hydroperoxides to water and alcohols, respectively. Plays a role in cell protection against oxidative stress by detoxifying peroxides.</text>
</comment>
<comment type="catalytic activity">
    <reaction evidence="1">
        <text>a hydroperoxide + [thioredoxin]-dithiol = an alcohol + [thioredoxin]-disulfide + H2O</text>
        <dbReference type="Rhea" id="RHEA:62620"/>
        <dbReference type="Rhea" id="RHEA-COMP:10698"/>
        <dbReference type="Rhea" id="RHEA-COMP:10700"/>
        <dbReference type="ChEBI" id="CHEBI:15377"/>
        <dbReference type="ChEBI" id="CHEBI:29950"/>
        <dbReference type="ChEBI" id="CHEBI:30879"/>
        <dbReference type="ChEBI" id="CHEBI:35924"/>
        <dbReference type="ChEBI" id="CHEBI:50058"/>
        <dbReference type="EC" id="1.11.1.24"/>
    </reaction>
</comment>
<comment type="subunit">
    <text evidence="1">Homodimer.</text>
</comment>
<comment type="miscellaneous">
    <text evidence="1">The active site is a conserved redox-active cysteine residue, the peroxidatic cysteine (C(P)), which makes the nucleophilic attack on the peroxide substrate. The peroxide oxidizes the C(P)-SH to cysteine sulfenic acid (C(P)-SOH), which then reacts with another cysteine residue, the resolving cysteine (C(R)), to form a disulfide bridge. The disulfide is subsequently reduced by an appropriate electron donor to complete the catalytic cycle. In this atypical 2-Cys peroxiredoxin, C(R) is present in the same subunit to form an intramolecular disulfide. The disulfide is subsequently reduced by thioredoxin.</text>
</comment>
<comment type="similarity">
    <text evidence="1">Belongs to the peroxiredoxin family. Tpx subfamily.</text>
</comment>
<evidence type="ECO:0000255" key="1">
    <source>
        <dbReference type="HAMAP-Rule" id="MF_00269"/>
    </source>
</evidence>
<dbReference type="EC" id="1.11.1.24" evidence="1"/>
<dbReference type="EMBL" id="U40786">
    <property type="protein sequence ID" value="AAC24471.1"/>
    <property type="molecule type" value="Genomic_DNA"/>
</dbReference>
<dbReference type="EMBL" id="CP000410">
    <property type="protein sequence ID" value="ABJ55447.1"/>
    <property type="molecule type" value="Genomic_DNA"/>
</dbReference>
<dbReference type="RefSeq" id="WP_000256028.1">
    <property type="nucleotide sequence ID" value="NZ_JAMLJR010000013.1"/>
</dbReference>
<dbReference type="SMR" id="Q04JB8"/>
<dbReference type="PaxDb" id="373153-SPD_1464"/>
<dbReference type="GeneID" id="45653135"/>
<dbReference type="KEGG" id="spd:SPD_1464"/>
<dbReference type="eggNOG" id="COG2077">
    <property type="taxonomic scope" value="Bacteria"/>
</dbReference>
<dbReference type="HOGENOM" id="CLU_042529_12_0_9"/>
<dbReference type="BioCyc" id="SPNE373153:G1G6V-1580-MONOMER"/>
<dbReference type="Proteomes" id="UP000001452">
    <property type="component" value="Chromosome"/>
</dbReference>
<dbReference type="GO" id="GO:0008379">
    <property type="term" value="F:thioredoxin peroxidase activity"/>
    <property type="evidence" value="ECO:0007669"/>
    <property type="project" value="UniProtKB-UniRule"/>
</dbReference>
<dbReference type="CDD" id="cd03014">
    <property type="entry name" value="PRX_Atyp2cys"/>
    <property type="match status" value="1"/>
</dbReference>
<dbReference type="Gene3D" id="3.40.30.10">
    <property type="entry name" value="Glutaredoxin"/>
    <property type="match status" value="1"/>
</dbReference>
<dbReference type="HAMAP" id="MF_00269">
    <property type="entry name" value="Tpx"/>
    <property type="match status" value="1"/>
</dbReference>
<dbReference type="InterPro" id="IPR013740">
    <property type="entry name" value="Redoxin"/>
</dbReference>
<dbReference type="InterPro" id="IPR036249">
    <property type="entry name" value="Thioredoxin-like_sf"/>
</dbReference>
<dbReference type="InterPro" id="IPR013766">
    <property type="entry name" value="Thioredoxin_domain"/>
</dbReference>
<dbReference type="InterPro" id="IPR002065">
    <property type="entry name" value="TPX"/>
</dbReference>
<dbReference type="InterPro" id="IPR018219">
    <property type="entry name" value="Tpx_CS"/>
</dbReference>
<dbReference type="InterPro" id="IPR050455">
    <property type="entry name" value="Tpx_Peroxidase_subfamily"/>
</dbReference>
<dbReference type="NCBIfam" id="NF001808">
    <property type="entry name" value="PRK00522.1"/>
    <property type="match status" value="1"/>
</dbReference>
<dbReference type="PANTHER" id="PTHR43110">
    <property type="entry name" value="THIOL PEROXIDASE"/>
    <property type="match status" value="1"/>
</dbReference>
<dbReference type="PANTHER" id="PTHR43110:SF1">
    <property type="entry name" value="THIOL PEROXIDASE"/>
    <property type="match status" value="1"/>
</dbReference>
<dbReference type="Pfam" id="PF08534">
    <property type="entry name" value="Redoxin"/>
    <property type="match status" value="1"/>
</dbReference>
<dbReference type="SUPFAM" id="SSF52833">
    <property type="entry name" value="Thioredoxin-like"/>
    <property type="match status" value="1"/>
</dbReference>
<dbReference type="PROSITE" id="PS51352">
    <property type="entry name" value="THIOREDOXIN_2"/>
    <property type="match status" value="1"/>
</dbReference>
<dbReference type="PROSITE" id="PS01265">
    <property type="entry name" value="TPX"/>
    <property type="match status" value="1"/>
</dbReference>
<reference key="1">
    <citation type="journal article" date="1996" name="Infect. Immun.">
        <title>Sequence heterogeneity of PsaA, a 37-kilodalton putative adhesin essential for virulence of Streptococcus pneumoniae.</title>
        <authorList>
            <person name="Berry A.M."/>
            <person name="Paton J.C."/>
        </authorList>
    </citation>
    <scope>NUCLEOTIDE SEQUENCE [GENOMIC DNA]</scope>
</reference>
<reference key="2">
    <citation type="journal article" date="2007" name="J. Bacteriol.">
        <title>Genome sequence of Avery's virulent serotype 2 strain D39 of Streptococcus pneumoniae and comparison with that of unencapsulated laboratory strain R6.</title>
        <authorList>
            <person name="Lanie J.A."/>
            <person name="Ng W.-L."/>
            <person name="Kazmierczak K.M."/>
            <person name="Andrzejewski T.M."/>
            <person name="Davidsen T.M."/>
            <person name="Wayne K.J."/>
            <person name="Tettelin H."/>
            <person name="Glass J.I."/>
            <person name="Winkler M.E."/>
        </authorList>
    </citation>
    <scope>NUCLEOTIDE SEQUENCE [LARGE SCALE GENOMIC DNA]</scope>
    <source>
        <strain>D39 / NCTC 7466</strain>
    </source>
</reference>
<accession>Q04JB8</accession>
<accession>P0A4M5</accession>
<accession>P72500</accession>
<accession>Q9R6P4</accession>
<proteinExistence type="inferred from homology"/>
<gene>
    <name evidence="1" type="primary">tpx</name>
    <name type="synonym">psaD</name>
    <name type="ordered locus">SPD_1464</name>
</gene>
<sequence length="163" mass="18019">MVTFLGNPVSFTGKQLQVGDKALDFSLTTTDLSKKSLADFDGKKKVLSVVPSIDTGICSTQTRRFNEELAGLDNTVVLTVSMDLPFAQKRWCGAEGLDNAIMLSDYFDHSFGRDYALLINEWHLLARAVFVLDTDNTIRYVEYVDNINSEPNFEAAIAAAKAL</sequence>